<organism>
    <name type="scientific">Emericella nidulans (strain FGSC A4 / ATCC 38163 / CBS 112.46 / NRRL 194 / M139)</name>
    <name type="common">Aspergillus nidulans</name>
    <dbReference type="NCBI Taxonomy" id="227321"/>
    <lineage>
        <taxon>Eukaryota</taxon>
        <taxon>Fungi</taxon>
        <taxon>Dikarya</taxon>
        <taxon>Ascomycota</taxon>
        <taxon>Pezizomycotina</taxon>
        <taxon>Eurotiomycetes</taxon>
        <taxon>Eurotiomycetidae</taxon>
        <taxon>Eurotiales</taxon>
        <taxon>Aspergillaceae</taxon>
        <taxon>Aspergillus</taxon>
        <taxon>Aspergillus subgen. Nidulantes</taxon>
    </lineage>
</organism>
<proteinExistence type="evidence at transcript level"/>
<evidence type="ECO:0000250" key="1">
    <source>
        <dbReference type="UniProtKB" id="E4QP00"/>
    </source>
</evidence>
<evidence type="ECO:0000255" key="2"/>
<evidence type="ECO:0000255" key="3">
    <source>
        <dbReference type="PROSITE-ProRule" id="PRU00498"/>
    </source>
</evidence>
<evidence type="ECO:0000269" key="4">
    <source>
    </source>
</evidence>
<evidence type="ECO:0000269" key="5">
    <source>
    </source>
</evidence>
<evidence type="ECO:0000303" key="6">
    <source>
    </source>
</evidence>
<evidence type="ECO:0000305" key="7"/>
<evidence type="ECO:0000305" key="8">
    <source>
    </source>
</evidence>
<gene>
    <name evidence="6" type="primary">pkfF</name>
    <name type="ORF">ANIA_03229</name>
</gene>
<reference key="1">
    <citation type="journal article" date="2005" name="Nature">
        <title>Sequencing of Aspergillus nidulans and comparative analysis with A. fumigatus and A. oryzae.</title>
        <authorList>
            <person name="Galagan J.E."/>
            <person name="Calvo S.E."/>
            <person name="Cuomo C."/>
            <person name="Ma L.-J."/>
            <person name="Wortman J.R."/>
            <person name="Batzoglou S."/>
            <person name="Lee S.-I."/>
            <person name="Bastuerkmen M."/>
            <person name="Spevak C.C."/>
            <person name="Clutterbuck J."/>
            <person name="Kapitonov V."/>
            <person name="Jurka J."/>
            <person name="Scazzocchio C."/>
            <person name="Farman M.L."/>
            <person name="Butler J."/>
            <person name="Purcell S."/>
            <person name="Harris S."/>
            <person name="Braus G.H."/>
            <person name="Draht O."/>
            <person name="Busch S."/>
            <person name="D'Enfert C."/>
            <person name="Bouchier C."/>
            <person name="Goldman G.H."/>
            <person name="Bell-Pedersen D."/>
            <person name="Griffiths-Jones S."/>
            <person name="Doonan J.H."/>
            <person name="Yu J."/>
            <person name="Vienken K."/>
            <person name="Pain A."/>
            <person name="Freitag M."/>
            <person name="Selker E.U."/>
            <person name="Archer D.B."/>
            <person name="Penalva M.A."/>
            <person name="Oakley B.R."/>
            <person name="Momany M."/>
            <person name="Tanaka T."/>
            <person name="Kumagai T."/>
            <person name="Asai K."/>
            <person name="Machida M."/>
            <person name="Nierman W.C."/>
            <person name="Denning D.W."/>
            <person name="Caddick M.X."/>
            <person name="Hynes M."/>
            <person name="Paoletti M."/>
            <person name="Fischer R."/>
            <person name="Miller B.L."/>
            <person name="Dyer P.S."/>
            <person name="Sachs M.S."/>
            <person name="Osmani S.A."/>
            <person name="Birren B.W."/>
        </authorList>
    </citation>
    <scope>NUCLEOTIDE SEQUENCE [LARGE SCALE GENOMIC DNA]</scope>
    <source>
        <strain>FGSC A4 / ATCC 38163 / CBS 112.46 / NRRL 194 / M139</strain>
    </source>
</reference>
<reference key="2">
    <citation type="journal article" date="2009" name="Fungal Genet. Biol.">
        <title>The 2008 update of the Aspergillus nidulans genome annotation: a community effort.</title>
        <authorList>
            <person name="Wortman J.R."/>
            <person name="Gilsenan J.M."/>
            <person name="Joardar V."/>
            <person name="Deegan J."/>
            <person name="Clutterbuck J."/>
            <person name="Andersen M.R."/>
            <person name="Archer D."/>
            <person name="Bencina M."/>
            <person name="Braus G."/>
            <person name="Coutinho P."/>
            <person name="von Dohren H."/>
            <person name="Doonan J."/>
            <person name="Driessen A.J."/>
            <person name="Durek P."/>
            <person name="Espeso E."/>
            <person name="Fekete E."/>
            <person name="Flipphi M."/>
            <person name="Estrada C.G."/>
            <person name="Geysens S."/>
            <person name="Goldman G."/>
            <person name="de Groot P.W."/>
            <person name="Hansen K."/>
            <person name="Harris S.D."/>
            <person name="Heinekamp T."/>
            <person name="Helmstaedt K."/>
            <person name="Henrissat B."/>
            <person name="Hofmann G."/>
            <person name="Homan T."/>
            <person name="Horio T."/>
            <person name="Horiuchi H."/>
            <person name="James S."/>
            <person name="Jones M."/>
            <person name="Karaffa L."/>
            <person name="Karanyi Z."/>
            <person name="Kato M."/>
            <person name="Keller N."/>
            <person name="Kelly D.E."/>
            <person name="Kiel J.A."/>
            <person name="Kim J.M."/>
            <person name="van der Klei I.J."/>
            <person name="Klis F.M."/>
            <person name="Kovalchuk A."/>
            <person name="Krasevec N."/>
            <person name="Kubicek C.P."/>
            <person name="Liu B."/>
            <person name="Maccabe A."/>
            <person name="Meyer V."/>
            <person name="Mirabito P."/>
            <person name="Miskei M."/>
            <person name="Mos M."/>
            <person name="Mullins J."/>
            <person name="Nelson D.R."/>
            <person name="Nielsen J."/>
            <person name="Oakley B.R."/>
            <person name="Osmani S.A."/>
            <person name="Pakula T."/>
            <person name="Paszewski A."/>
            <person name="Paulsen I."/>
            <person name="Pilsyk S."/>
            <person name="Pocsi I."/>
            <person name="Punt P.J."/>
            <person name="Ram A.F."/>
            <person name="Ren Q."/>
            <person name="Robellet X."/>
            <person name="Robson G."/>
            <person name="Seiboth B."/>
            <person name="van Solingen P."/>
            <person name="Specht T."/>
            <person name="Sun J."/>
            <person name="Taheri-Talesh N."/>
            <person name="Takeshita N."/>
            <person name="Ussery D."/>
            <person name="vanKuyk P.A."/>
            <person name="Visser H."/>
            <person name="van de Vondervoort P.J."/>
            <person name="de Vries R.P."/>
            <person name="Walton J."/>
            <person name="Xiang X."/>
            <person name="Xiong Y."/>
            <person name="Zeng A.P."/>
            <person name="Brandt B.W."/>
            <person name="Cornell M.J."/>
            <person name="van den Hondel C.A."/>
            <person name="Visser J."/>
            <person name="Oliver S.G."/>
            <person name="Turner G."/>
        </authorList>
    </citation>
    <scope>GENOME REANNOTATION</scope>
    <source>
        <strain>FGSC A4 / ATCC 38163 / CBS 112.46 / NRRL 194 / M139</strain>
    </source>
</reference>
<reference key="3">
    <citation type="journal article" date="2012" name="J. Am. Chem. Soc.">
        <title>Illuminating the diversity of aromatic polyketide synthases in Aspergillus nidulans.</title>
        <authorList>
            <person name="Ahuja M."/>
            <person name="Chiang Y.M."/>
            <person name="Chang S.L."/>
            <person name="Praseuth M.B."/>
            <person name="Entwistle R."/>
            <person name="Sanchez J.F."/>
            <person name="Lo H.C."/>
            <person name="Yeh H.H."/>
            <person name="Oakley B.R."/>
            <person name="Wang C.C."/>
        </authorList>
    </citation>
    <scope>FUNCTION</scope>
</reference>
<reference key="4">
    <citation type="journal article" date="2013" name="Org. Lett.">
        <title>Molecular genetic characterization of the biosynthesis cluster of a prenylated isoindolinone alkaloid aspernidine A in Aspergillus nidulans.</title>
        <authorList>
            <person name="Yaegashi J."/>
            <person name="Praseuth M.B."/>
            <person name="Tyan S.W."/>
            <person name="Sanchez J.F."/>
            <person name="Entwistle R."/>
            <person name="Chiang Y.M."/>
            <person name="Oakley B.R."/>
            <person name="Wang C.C."/>
        </authorList>
    </citation>
    <scope>IDENTIFICATION</scope>
    <scope>DISRUPTION PHENOTYPE</scope>
    <scope>FUNCTION</scope>
    <scope>PATHWAY</scope>
</reference>
<reference key="5">
    <citation type="journal article" date="2015" name="Genetics">
        <title>Beyond asexual development: modifications in the gene expression profile caused by the absence of the Aspergillus nidulans transcription factor FlbB.</title>
        <authorList>
            <person name="Oiartzabal-Arano E."/>
            <person name="Garzia A."/>
            <person name="Gorostidi A."/>
            <person name="Ugalde U."/>
            <person name="Espeso E.A."/>
            <person name="Etxebeste O."/>
        </authorList>
    </citation>
    <scope>INDUCTION</scope>
</reference>
<dbReference type="EC" id="1.1.-.-" evidence="8"/>
<dbReference type="EMBL" id="AACD01000054">
    <property type="protein sequence ID" value="EAA63130.1"/>
    <property type="molecule type" value="Genomic_DNA"/>
</dbReference>
<dbReference type="EMBL" id="BN001306">
    <property type="protein sequence ID" value="CBF83141.1"/>
    <property type="molecule type" value="Genomic_DNA"/>
</dbReference>
<dbReference type="RefSeq" id="XP_660833.1">
    <property type="nucleotide sequence ID" value="XM_655741.1"/>
</dbReference>
<dbReference type="SMR" id="Q5B8A1"/>
<dbReference type="STRING" id="227321.Q5B8A1"/>
<dbReference type="CAZy" id="AA3">
    <property type="family name" value="Auxiliary Activities 3"/>
</dbReference>
<dbReference type="GlyCosmos" id="Q5B8A1">
    <property type="glycosylation" value="8 sites, No reported glycans"/>
</dbReference>
<dbReference type="EnsemblFungi" id="CBF83141">
    <property type="protein sequence ID" value="CBF83141"/>
    <property type="gene ID" value="ANIA_03229"/>
</dbReference>
<dbReference type="GeneID" id="2874279"/>
<dbReference type="KEGG" id="ani:ANIA_03229"/>
<dbReference type="VEuPathDB" id="FungiDB:AN3229"/>
<dbReference type="eggNOG" id="KOG1238">
    <property type="taxonomic scope" value="Eukaryota"/>
</dbReference>
<dbReference type="HOGENOM" id="CLU_002865_6_3_1"/>
<dbReference type="InParanoid" id="Q5B8A1"/>
<dbReference type="OMA" id="SWANWVD"/>
<dbReference type="OrthoDB" id="269227at2759"/>
<dbReference type="Proteomes" id="UP000000560">
    <property type="component" value="Chromosome VI"/>
</dbReference>
<dbReference type="GO" id="GO:0050660">
    <property type="term" value="F:flavin adenine dinucleotide binding"/>
    <property type="evidence" value="ECO:0007669"/>
    <property type="project" value="InterPro"/>
</dbReference>
<dbReference type="GO" id="GO:0016491">
    <property type="term" value="F:oxidoreductase activity"/>
    <property type="evidence" value="ECO:0000318"/>
    <property type="project" value="GO_Central"/>
</dbReference>
<dbReference type="GO" id="GO:0016614">
    <property type="term" value="F:oxidoreductase activity, acting on CH-OH group of donors"/>
    <property type="evidence" value="ECO:0007669"/>
    <property type="project" value="InterPro"/>
</dbReference>
<dbReference type="GO" id="GO:0044550">
    <property type="term" value="P:secondary metabolite biosynthetic process"/>
    <property type="evidence" value="ECO:0000315"/>
    <property type="project" value="AspGD"/>
</dbReference>
<dbReference type="Gene3D" id="3.50.50.60">
    <property type="entry name" value="FAD/NAD(P)-binding domain"/>
    <property type="match status" value="1"/>
</dbReference>
<dbReference type="Gene3D" id="3.30.560.10">
    <property type="entry name" value="Glucose Oxidase, domain 3"/>
    <property type="match status" value="1"/>
</dbReference>
<dbReference type="InterPro" id="IPR036188">
    <property type="entry name" value="FAD/NAD-bd_sf"/>
</dbReference>
<dbReference type="InterPro" id="IPR012132">
    <property type="entry name" value="GMC_OxRdtase"/>
</dbReference>
<dbReference type="InterPro" id="IPR000172">
    <property type="entry name" value="GMC_OxRdtase_N"/>
</dbReference>
<dbReference type="InterPro" id="IPR007867">
    <property type="entry name" value="GMC_OxRtase_C"/>
</dbReference>
<dbReference type="PANTHER" id="PTHR11552:SF138">
    <property type="entry name" value="DEHYDROGENASE PKFF-RELATED"/>
    <property type="match status" value="1"/>
</dbReference>
<dbReference type="PANTHER" id="PTHR11552">
    <property type="entry name" value="GLUCOSE-METHANOL-CHOLINE GMC OXIDOREDUCTASE"/>
    <property type="match status" value="1"/>
</dbReference>
<dbReference type="Pfam" id="PF05199">
    <property type="entry name" value="GMC_oxred_C"/>
    <property type="match status" value="1"/>
</dbReference>
<dbReference type="Pfam" id="PF00732">
    <property type="entry name" value="GMC_oxred_N"/>
    <property type="match status" value="1"/>
</dbReference>
<dbReference type="PIRSF" id="PIRSF000137">
    <property type="entry name" value="Alcohol_oxidase"/>
    <property type="match status" value="1"/>
</dbReference>
<dbReference type="SUPFAM" id="SSF54373">
    <property type="entry name" value="FAD-linked reductases, C-terminal domain"/>
    <property type="match status" value="1"/>
</dbReference>
<dbReference type="SUPFAM" id="SSF51905">
    <property type="entry name" value="FAD/NAD(P)-binding domain"/>
    <property type="match status" value="1"/>
</dbReference>
<dbReference type="PROSITE" id="PS00624">
    <property type="entry name" value="GMC_OXRED_2"/>
    <property type="match status" value="1"/>
</dbReference>
<sequence>MRHTALLPLVSSFIVPALAQIPGQTTVNATVNQGRFGNATYDYVIVGGGTSGLAIAARLAEDPSLSVAVIEAGGYYELDGTVASIIPGLAAGANVGTDATEYSTVDWNFQAQPLTSANDRSLRYNRGKTLGGSSARHYMVYQRGTRGSYDQWAELTGDESWGWDSVFPYFQRSVNVTPANMTGRFPNTTVTYDPSGFNKAGGPLHVTWPNYGSPWSTWIEQGLEAIGILPDTDFNTGTLNGSSWAPITINPLSQKRDSSETSFLQQSLKTTNLTVYLHTMALKIGFDGTTASSVDVRSPVGRFTLSARREIIVSAGALQSPQLLMVSGIGPRETLERHGIPVVKELAGVGQKMWEHPFFGITHQVNLVTATELAINQQALLQALNQYKSQQGPLTSAGFGVLGWEKLPNSTLSDSTNEALATFPSDWPTIEYLSIDGYLNGWHSAADQATGNGQQWGTIAVALVAPLSRGNVTISSSDMDDPPVFDLGFLTHPADREIAVAAMRRIRQAFAAISEITIGDEVVPGADVSTDEELLDFIRESIVPVYHVAGTCAMGREDDPEAVVDPQARVIGVNNLRVVDASIFPTLPPGHPQSTCYMVAEKIADLIKKGN</sequence>
<name>PKFF_EMENI</name>
<accession>Q5B8A1</accession>
<accession>A0A1U8QJW1</accession>
<accession>C8VI77</accession>
<feature type="signal peptide" evidence="2">
    <location>
        <begin position="1"/>
        <end position="19"/>
    </location>
</feature>
<feature type="chain" id="PRO_5010314143" description="Dehydrogenase pkfF" evidence="2">
    <location>
        <begin position="20"/>
        <end position="611"/>
    </location>
</feature>
<feature type="active site" description="Proton acceptor" evidence="1">
    <location>
        <position position="547"/>
    </location>
</feature>
<feature type="binding site" evidence="1">
    <location>
        <begin position="50"/>
        <end position="51"/>
    </location>
    <ligand>
        <name>FAD</name>
        <dbReference type="ChEBI" id="CHEBI:57692"/>
    </ligand>
</feature>
<feature type="binding site" evidence="1">
    <location>
        <begin position="71"/>
        <end position="72"/>
    </location>
    <ligand>
        <name>FAD</name>
        <dbReference type="ChEBI" id="CHEBI:57692"/>
    </ligand>
</feature>
<feature type="binding site" evidence="1">
    <location>
        <begin position="137"/>
        <end position="140"/>
    </location>
    <ligand>
        <name>FAD</name>
        <dbReference type="ChEBI" id="CHEBI:57692"/>
    </ligand>
</feature>
<feature type="binding site" evidence="1">
    <location>
        <position position="581"/>
    </location>
    <ligand>
        <name>FAD</name>
        <dbReference type="ChEBI" id="CHEBI:57692"/>
    </ligand>
</feature>
<feature type="binding site" evidence="1">
    <location>
        <begin position="592"/>
        <end position="593"/>
    </location>
    <ligand>
        <name>FAD</name>
        <dbReference type="ChEBI" id="CHEBI:57692"/>
    </ligand>
</feature>
<feature type="glycosylation site" description="N-linked (GlcNAc...) asparagine" evidence="3">
    <location>
        <position position="28"/>
    </location>
</feature>
<feature type="glycosylation site" description="N-linked (GlcNAc...) asparagine" evidence="3">
    <location>
        <position position="38"/>
    </location>
</feature>
<feature type="glycosylation site" description="N-linked (GlcNAc...) asparagine" evidence="3">
    <location>
        <position position="180"/>
    </location>
</feature>
<feature type="glycosylation site" description="N-linked (GlcNAc...) asparagine" evidence="3">
    <location>
        <position position="187"/>
    </location>
</feature>
<feature type="glycosylation site" description="N-linked (GlcNAc...) asparagine" evidence="3">
    <location>
        <position position="240"/>
    </location>
</feature>
<feature type="glycosylation site" description="N-linked (GlcNAc...) asparagine" evidence="3">
    <location>
        <position position="272"/>
    </location>
</feature>
<feature type="glycosylation site" description="N-linked (GlcNAc...) asparagine" evidence="3">
    <location>
        <position position="409"/>
    </location>
</feature>
<feature type="glycosylation site" description="N-linked (GlcNAc...) asparagine" evidence="3">
    <location>
        <position position="471"/>
    </location>
</feature>
<protein>
    <recommendedName>
        <fullName evidence="6">Dehydrogenase pkfF</fullName>
        <ecNumber evidence="8">1.1.-.-</ecNumber>
    </recommendedName>
</protein>
<comment type="function">
    <text evidence="4 5 8">Dehydrogenase; part of the gene cluster that mediates the biosynthesis of aspernidine A, a prenylated isoindolinone (PubMed:23706169). The starting point of the biosynthesis of aspernidin A is the production of orsellinaldehyde by the non-reducing polyketide synthase pkfA (PubMed:22510154). Hydroxylation, methylation of one of the phenol groups, and prenylation, presumably catalyzed by the prenyltransferase pkfE, would be needed to yield aspernidine D (Probable). Subsequently, the cytochrome P450 monooxygenase pkfB is responsible for hydroxylation of aspernidine D to yield aspernidine E (PubMed:23706169). The dehydrogenase pkfF may be responsible for further oxidation of aspernidine E to form a dialdehyde intermediate which is further transformed in a series of steps, some of which are enzyme-mediated, to generate aspernidine A (Probable). The possibility that additional enzymes outside of the cluster are involved in aspernidine A biosynthesis cannot be excluded (Probable).</text>
</comment>
<comment type="cofactor">
    <cofactor evidence="1">
        <name>FAD</name>
        <dbReference type="ChEBI" id="CHEBI:57692"/>
    </cofactor>
</comment>
<comment type="pathway">
    <text evidence="5">Secondary metabolite biosynthesis.</text>
</comment>
<comment type="disruption phenotype">
    <text evidence="5">Abolishes the production of aspernidine A, but accumulates the intermediate aspernidine E.</text>
</comment>
<comment type="similarity">
    <text evidence="7">Belongs to the GMC oxidoreductase family.</text>
</comment>
<keyword id="KW-0274">FAD</keyword>
<keyword id="KW-0285">Flavoprotein</keyword>
<keyword id="KW-0325">Glycoprotein</keyword>
<keyword id="KW-0560">Oxidoreductase</keyword>
<keyword id="KW-1185">Reference proteome</keyword>
<keyword id="KW-0732">Signal</keyword>